<organism>
    <name type="scientific">Synechococcus sp. (strain CC9605)</name>
    <dbReference type="NCBI Taxonomy" id="110662"/>
    <lineage>
        <taxon>Bacteria</taxon>
        <taxon>Bacillati</taxon>
        <taxon>Cyanobacteriota</taxon>
        <taxon>Cyanophyceae</taxon>
        <taxon>Synechococcales</taxon>
        <taxon>Synechococcaceae</taxon>
        <taxon>Synechococcus</taxon>
    </lineage>
</organism>
<sequence length="441" mass="45937">MSGTGQSDDPRELKAGGSLQGRVKVPGDKSISHRSLLFGAIAEGTTTIDGLLPAEDPLSTAACLRAMGVSISPITDGGIVTVEGVGVDGLQEPAEVLDCGNSGTTMRLMLGLLAGRDGRHFVLDGDASLRRRPMRRVGQPLASMGAEVRGRDGGNLAPLAVQGRQLKGTVIGTPVASAQVKSALLLAALTAESPTTVIEPAQSRDHSERMLKAFGADLTVGGEIGRHISVRPGATLQGKNVVVPGDISSAAFWLVAGALIPGADLTIENVGLNPTRTGILEVLEQMGALIEVLNPRDVAGEPVGDLRVTHGPLKPFNFGEEIMPSLVDEVPILSVAACFCEGESRISGASELRVKETDRLAVMARQLKAMGADIDEHEDGMTIRGGRPLKGAALDSETDHRVAMSLGVAAMLADGNSSLARSEAAAVSYPSFWDELERLRC</sequence>
<proteinExistence type="inferred from homology"/>
<protein>
    <recommendedName>
        <fullName evidence="1">3-phosphoshikimate 1-carboxyvinyltransferase</fullName>
        <ecNumber evidence="1">2.5.1.19</ecNumber>
    </recommendedName>
    <alternativeName>
        <fullName evidence="1">5-enolpyruvylshikimate-3-phosphate synthase</fullName>
        <shortName evidence="1">EPSP synthase</shortName>
        <shortName evidence="1">EPSPS</shortName>
    </alternativeName>
</protein>
<name>AROA_SYNSC</name>
<accession>Q3AKJ6</accession>
<keyword id="KW-0028">Amino-acid biosynthesis</keyword>
<keyword id="KW-0057">Aromatic amino acid biosynthesis</keyword>
<keyword id="KW-0963">Cytoplasm</keyword>
<keyword id="KW-0808">Transferase</keyword>
<dbReference type="EC" id="2.5.1.19" evidence="1"/>
<dbReference type="EMBL" id="CP000110">
    <property type="protein sequence ID" value="ABB34886.1"/>
    <property type="molecule type" value="Genomic_DNA"/>
</dbReference>
<dbReference type="RefSeq" id="WP_011364107.1">
    <property type="nucleotide sequence ID" value="NC_007516.1"/>
</dbReference>
<dbReference type="SMR" id="Q3AKJ6"/>
<dbReference type="STRING" id="110662.Syncc9605_1131"/>
<dbReference type="KEGG" id="syd:Syncc9605_1131"/>
<dbReference type="eggNOG" id="COG0128">
    <property type="taxonomic scope" value="Bacteria"/>
</dbReference>
<dbReference type="HOGENOM" id="CLU_024321_0_1_3"/>
<dbReference type="OrthoDB" id="9809920at2"/>
<dbReference type="UniPathway" id="UPA00053">
    <property type="reaction ID" value="UER00089"/>
</dbReference>
<dbReference type="GO" id="GO:0005737">
    <property type="term" value="C:cytoplasm"/>
    <property type="evidence" value="ECO:0007669"/>
    <property type="project" value="UniProtKB-SubCell"/>
</dbReference>
<dbReference type="GO" id="GO:0003866">
    <property type="term" value="F:3-phosphoshikimate 1-carboxyvinyltransferase activity"/>
    <property type="evidence" value="ECO:0007669"/>
    <property type="project" value="UniProtKB-UniRule"/>
</dbReference>
<dbReference type="GO" id="GO:0008652">
    <property type="term" value="P:amino acid biosynthetic process"/>
    <property type="evidence" value="ECO:0007669"/>
    <property type="project" value="UniProtKB-KW"/>
</dbReference>
<dbReference type="GO" id="GO:0009073">
    <property type="term" value="P:aromatic amino acid family biosynthetic process"/>
    <property type="evidence" value="ECO:0007669"/>
    <property type="project" value="UniProtKB-KW"/>
</dbReference>
<dbReference type="GO" id="GO:0009423">
    <property type="term" value="P:chorismate biosynthetic process"/>
    <property type="evidence" value="ECO:0007669"/>
    <property type="project" value="UniProtKB-UniRule"/>
</dbReference>
<dbReference type="CDD" id="cd01556">
    <property type="entry name" value="EPSP_synthase"/>
    <property type="match status" value="1"/>
</dbReference>
<dbReference type="FunFam" id="3.65.10.10:FF:000005">
    <property type="entry name" value="3-phosphoshikimate 1-carboxyvinyltransferase"/>
    <property type="match status" value="1"/>
</dbReference>
<dbReference type="FunFam" id="3.65.10.10:FF:000006">
    <property type="entry name" value="3-phosphoshikimate 1-carboxyvinyltransferase"/>
    <property type="match status" value="1"/>
</dbReference>
<dbReference type="Gene3D" id="3.65.10.10">
    <property type="entry name" value="Enolpyruvate transferase domain"/>
    <property type="match status" value="2"/>
</dbReference>
<dbReference type="HAMAP" id="MF_00210">
    <property type="entry name" value="EPSP_synth"/>
    <property type="match status" value="1"/>
</dbReference>
<dbReference type="InterPro" id="IPR001986">
    <property type="entry name" value="Enolpyruvate_Tfrase_dom"/>
</dbReference>
<dbReference type="InterPro" id="IPR036968">
    <property type="entry name" value="Enolpyruvate_Tfrase_sf"/>
</dbReference>
<dbReference type="InterPro" id="IPR006264">
    <property type="entry name" value="EPSP_synthase"/>
</dbReference>
<dbReference type="InterPro" id="IPR023193">
    <property type="entry name" value="EPSP_synthase_CS"/>
</dbReference>
<dbReference type="InterPro" id="IPR013792">
    <property type="entry name" value="RNA3'P_cycl/enolpyr_Trfase_a/b"/>
</dbReference>
<dbReference type="NCBIfam" id="TIGR01356">
    <property type="entry name" value="aroA"/>
    <property type="match status" value="1"/>
</dbReference>
<dbReference type="PANTHER" id="PTHR21090">
    <property type="entry name" value="AROM/DEHYDROQUINATE SYNTHASE"/>
    <property type="match status" value="1"/>
</dbReference>
<dbReference type="PANTHER" id="PTHR21090:SF5">
    <property type="entry name" value="PENTAFUNCTIONAL AROM POLYPEPTIDE"/>
    <property type="match status" value="1"/>
</dbReference>
<dbReference type="Pfam" id="PF00275">
    <property type="entry name" value="EPSP_synthase"/>
    <property type="match status" value="1"/>
</dbReference>
<dbReference type="PIRSF" id="PIRSF000505">
    <property type="entry name" value="EPSPS"/>
    <property type="match status" value="1"/>
</dbReference>
<dbReference type="SUPFAM" id="SSF55205">
    <property type="entry name" value="EPT/RTPC-like"/>
    <property type="match status" value="1"/>
</dbReference>
<dbReference type="PROSITE" id="PS00104">
    <property type="entry name" value="EPSP_SYNTHASE_1"/>
    <property type="match status" value="1"/>
</dbReference>
<dbReference type="PROSITE" id="PS00885">
    <property type="entry name" value="EPSP_SYNTHASE_2"/>
    <property type="match status" value="1"/>
</dbReference>
<reference key="1">
    <citation type="submission" date="2005-07" db="EMBL/GenBank/DDBJ databases">
        <title>Complete sequence of Synechococcus sp. CC9605.</title>
        <authorList>
            <consortium name="US DOE Joint Genome Institute"/>
            <person name="Copeland A."/>
            <person name="Lucas S."/>
            <person name="Lapidus A."/>
            <person name="Barry K."/>
            <person name="Detter J.C."/>
            <person name="Glavina T."/>
            <person name="Hammon N."/>
            <person name="Israni S."/>
            <person name="Pitluck S."/>
            <person name="Schmutz J."/>
            <person name="Martinez M."/>
            <person name="Larimer F."/>
            <person name="Land M."/>
            <person name="Kyrpides N."/>
            <person name="Ivanova N."/>
            <person name="Richardson P."/>
        </authorList>
    </citation>
    <scope>NUCLEOTIDE SEQUENCE [LARGE SCALE GENOMIC DNA]</scope>
    <source>
        <strain>CC9605</strain>
    </source>
</reference>
<comment type="function">
    <text evidence="1">Catalyzes the transfer of the enolpyruvyl moiety of phosphoenolpyruvate (PEP) to the 5-hydroxyl of shikimate-3-phosphate (S3P) to produce enolpyruvyl shikimate-3-phosphate and inorganic phosphate.</text>
</comment>
<comment type="catalytic activity">
    <reaction evidence="1">
        <text>3-phosphoshikimate + phosphoenolpyruvate = 5-O-(1-carboxyvinyl)-3-phosphoshikimate + phosphate</text>
        <dbReference type="Rhea" id="RHEA:21256"/>
        <dbReference type="ChEBI" id="CHEBI:43474"/>
        <dbReference type="ChEBI" id="CHEBI:57701"/>
        <dbReference type="ChEBI" id="CHEBI:58702"/>
        <dbReference type="ChEBI" id="CHEBI:145989"/>
        <dbReference type="EC" id="2.5.1.19"/>
    </reaction>
    <physiologicalReaction direction="left-to-right" evidence="1">
        <dbReference type="Rhea" id="RHEA:21257"/>
    </physiologicalReaction>
</comment>
<comment type="pathway">
    <text evidence="1">Metabolic intermediate biosynthesis; chorismate biosynthesis; chorismate from D-erythrose 4-phosphate and phosphoenolpyruvate: step 6/7.</text>
</comment>
<comment type="subunit">
    <text evidence="1">Monomer.</text>
</comment>
<comment type="subcellular location">
    <subcellularLocation>
        <location evidence="1">Cytoplasm</location>
    </subcellularLocation>
</comment>
<comment type="similarity">
    <text evidence="1">Belongs to the EPSP synthase family.</text>
</comment>
<gene>
    <name evidence="1" type="primary">aroA</name>
    <name type="ordered locus">Syncc9605_1131</name>
</gene>
<evidence type="ECO:0000255" key="1">
    <source>
        <dbReference type="HAMAP-Rule" id="MF_00210"/>
    </source>
</evidence>
<evidence type="ECO:0000256" key="2">
    <source>
        <dbReference type="SAM" id="MobiDB-lite"/>
    </source>
</evidence>
<feature type="chain" id="PRO_0000325385" description="3-phosphoshikimate 1-carboxyvinyltransferase">
    <location>
        <begin position="1"/>
        <end position="441"/>
    </location>
</feature>
<feature type="region of interest" description="Disordered" evidence="2">
    <location>
        <begin position="1"/>
        <end position="24"/>
    </location>
</feature>
<feature type="active site" description="Proton acceptor" evidence="1">
    <location>
        <position position="328"/>
    </location>
</feature>
<feature type="binding site" evidence="1">
    <location>
        <position position="29"/>
    </location>
    <ligand>
        <name>3-phosphoshikimate</name>
        <dbReference type="ChEBI" id="CHEBI:145989"/>
    </ligand>
</feature>
<feature type="binding site" evidence="1">
    <location>
        <position position="29"/>
    </location>
    <ligand>
        <name>phosphoenolpyruvate</name>
        <dbReference type="ChEBI" id="CHEBI:58702"/>
    </ligand>
</feature>
<feature type="binding site" evidence="1">
    <location>
        <position position="30"/>
    </location>
    <ligand>
        <name>3-phosphoshikimate</name>
        <dbReference type="ChEBI" id="CHEBI:145989"/>
    </ligand>
</feature>
<feature type="binding site" evidence="1">
    <location>
        <position position="34"/>
    </location>
    <ligand>
        <name>3-phosphoshikimate</name>
        <dbReference type="ChEBI" id="CHEBI:145989"/>
    </ligand>
</feature>
<feature type="binding site" evidence="1">
    <location>
        <position position="103"/>
    </location>
    <ligand>
        <name>phosphoenolpyruvate</name>
        <dbReference type="ChEBI" id="CHEBI:58702"/>
    </ligand>
</feature>
<feature type="binding site" evidence="1">
    <location>
        <position position="132"/>
    </location>
    <ligand>
        <name>phosphoenolpyruvate</name>
        <dbReference type="ChEBI" id="CHEBI:58702"/>
    </ligand>
</feature>
<feature type="binding site" evidence="1">
    <location>
        <position position="177"/>
    </location>
    <ligand>
        <name>3-phosphoshikimate</name>
        <dbReference type="ChEBI" id="CHEBI:145989"/>
    </ligand>
</feature>
<feature type="binding site" evidence="1">
    <location>
        <position position="179"/>
    </location>
    <ligand>
        <name>3-phosphoshikimate</name>
        <dbReference type="ChEBI" id="CHEBI:145989"/>
    </ligand>
</feature>
<feature type="binding site" evidence="1">
    <location>
        <position position="179"/>
    </location>
    <ligand>
        <name>phosphoenolpyruvate</name>
        <dbReference type="ChEBI" id="CHEBI:58702"/>
    </ligand>
</feature>
<feature type="binding site" evidence="1">
    <location>
        <position position="328"/>
    </location>
    <ligand>
        <name>3-phosphoshikimate</name>
        <dbReference type="ChEBI" id="CHEBI:145989"/>
    </ligand>
</feature>
<feature type="binding site" evidence="1">
    <location>
        <position position="355"/>
    </location>
    <ligand>
        <name>3-phosphoshikimate</name>
        <dbReference type="ChEBI" id="CHEBI:145989"/>
    </ligand>
</feature>
<feature type="binding site" evidence="1">
    <location>
        <position position="359"/>
    </location>
    <ligand>
        <name>phosphoenolpyruvate</name>
        <dbReference type="ChEBI" id="CHEBI:58702"/>
    </ligand>
</feature>
<feature type="binding site" evidence="1">
    <location>
        <position position="401"/>
    </location>
    <ligand>
        <name>phosphoenolpyruvate</name>
        <dbReference type="ChEBI" id="CHEBI:58702"/>
    </ligand>
</feature>